<keyword id="KW-0479">Metal-binding</keyword>
<keyword id="KW-0539">Nucleus</keyword>
<keyword id="KW-1185">Reference proteome</keyword>
<keyword id="KW-0677">Repeat</keyword>
<keyword id="KW-0804">Transcription</keyword>
<keyword id="KW-0805">Transcription regulation</keyword>
<keyword id="KW-0862">Zinc</keyword>
<keyword id="KW-0863">Zinc-finger</keyword>
<sequence>MVARSEEVEIVEDTAAKCLMLLSRVGECGGGGEKRVFRCKTCLKEFSSFQALGGHRASHKKLINSSDPSLLGSLSNKKTKTATSHPCPICGVEFPMGQALGGHMRRHRSEKASPGTLVTRSFLPETTTVTTLKKSSSGKRVACLDLDSMESLVNWKLELGRTIS</sequence>
<evidence type="ECO:0000250" key="1"/>
<evidence type="ECO:0000255" key="2">
    <source>
        <dbReference type="PROSITE-ProRule" id="PRU00042"/>
    </source>
</evidence>
<evidence type="ECO:0000269" key="3">
    <source>
    </source>
</evidence>
<evidence type="ECO:0000305" key="4"/>
<accession>Q9LX85</accession>
<name>ZAT8_ARATH</name>
<protein>
    <recommendedName>
        <fullName>Zinc finger protein ZAT8</fullName>
    </recommendedName>
</protein>
<dbReference type="EMBL" id="AL355775">
    <property type="protein sequence ID" value="CAB90935.1"/>
    <property type="molecule type" value="Genomic_DNA"/>
</dbReference>
<dbReference type="EMBL" id="CP002686">
    <property type="protein sequence ID" value="AEE78110.1"/>
    <property type="molecule type" value="Genomic_DNA"/>
</dbReference>
<dbReference type="EMBL" id="AB493640">
    <property type="protein sequence ID" value="BAH30478.1"/>
    <property type="molecule type" value="mRNA"/>
</dbReference>
<dbReference type="PIR" id="T49249">
    <property type="entry name" value="T49249"/>
</dbReference>
<dbReference type="RefSeq" id="NP_190194.1">
    <property type="nucleotide sequence ID" value="NM_114477.2"/>
</dbReference>
<dbReference type="BioGRID" id="9071">
    <property type="interactions" value="1"/>
</dbReference>
<dbReference type="STRING" id="3702.Q9LX85"/>
<dbReference type="PaxDb" id="3702-AT3G46080.1"/>
<dbReference type="ProteomicsDB" id="242930"/>
<dbReference type="DNASU" id="823751"/>
<dbReference type="EnsemblPlants" id="AT3G46080.1">
    <property type="protein sequence ID" value="AT3G46080.1"/>
    <property type="gene ID" value="AT3G46080"/>
</dbReference>
<dbReference type="GeneID" id="823751"/>
<dbReference type="Gramene" id="AT3G46080.1">
    <property type="protein sequence ID" value="AT3G46080.1"/>
    <property type="gene ID" value="AT3G46080"/>
</dbReference>
<dbReference type="KEGG" id="ath:AT3G46080"/>
<dbReference type="Araport" id="AT3G46080"/>
<dbReference type="TAIR" id="AT3G46080"/>
<dbReference type="eggNOG" id="KOG1721">
    <property type="taxonomic scope" value="Eukaryota"/>
</dbReference>
<dbReference type="HOGENOM" id="CLU_059471_3_3_1"/>
<dbReference type="InParanoid" id="Q9LX85"/>
<dbReference type="OMA" id="KCIRGES"/>
<dbReference type="PhylomeDB" id="Q9LX85"/>
<dbReference type="PRO" id="PR:Q9LX85"/>
<dbReference type="Proteomes" id="UP000006548">
    <property type="component" value="Chromosome 3"/>
</dbReference>
<dbReference type="ExpressionAtlas" id="Q9LX85">
    <property type="expression patterns" value="baseline and differential"/>
</dbReference>
<dbReference type="GO" id="GO:0005634">
    <property type="term" value="C:nucleus"/>
    <property type="evidence" value="ECO:0007669"/>
    <property type="project" value="UniProtKB-SubCell"/>
</dbReference>
<dbReference type="GO" id="GO:0003700">
    <property type="term" value="F:DNA-binding transcription factor activity"/>
    <property type="evidence" value="ECO:0000250"/>
    <property type="project" value="TAIR"/>
</dbReference>
<dbReference type="GO" id="GO:0008270">
    <property type="term" value="F:zinc ion binding"/>
    <property type="evidence" value="ECO:0007669"/>
    <property type="project" value="UniProtKB-KW"/>
</dbReference>
<dbReference type="GO" id="GO:0071456">
    <property type="term" value="P:cellular response to hypoxia"/>
    <property type="evidence" value="ECO:0007007"/>
    <property type="project" value="TAIR"/>
</dbReference>
<dbReference type="GO" id="GO:0006355">
    <property type="term" value="P:regulation of DNA-templated transcription"/>
    <property type="evidence" value="ECO:0000304"/>
    <property type="project" value="TAIR"/>
</dbReference>
<dbReference type="Gene3D" id="3.30.160.60">
    <property type="entry name" value="Classic Zinc Finger"/>
    <property type="match status" value="1"/>
</dbReference>
<dbReference type="InterPro" id="IPR036236">
    <property type="entry name" value="Znf_C2H2_sf"/>
</dbReference>
<dbReference type="InterPro" id="IPR013087">
    <property type="entry name" value="Znf_C2H2_type"/>
</dbReference>
<dbReference type="PANTHER" id="PTHR26374">
    <property type="entry name" value="ZINC FINGER PROTEIN ZAT5"/>
    <property type="match status" value="1"/>
</dbReference>
<dbReference type="PANTHER" id="PTHR26374:SF388">
    <property type="entry name" value="ZINC FINGER PROTEIN ZAT7-RELATED"/>
    <property type="match status" value="1"/>
</dbReference>
<dbReference type="Pfam" id="PF13912">
    <property type="entry name" value="zf-C2H2_6"/>
    <property type="match status" value="2"/>
</dbReference>
<dbReference type="SMART" id="SM00355">
    <property type="entry name" value="ZnF_C2H2"/>
    <property type="match status" value="2"/>
</dbReference>
<dbReference type="SUPFAM" id="SSF57667">
    <property type="entry name" value="beta-beta-alpha zinc fingers"/>
    <property type="match status" value="1"/>
</dbReference>
<dbReference type="PROSITE" id="PS00028">
    <property type="entry name" value="ZINC_FINGER_C2H2_1"/>
    <property type="match status" value="2"/>
</dbReference>
<dbReference type="PROSITE" id="PS50157">
    <property type="entry name" value="ZINC_FINGER_C2H2_2"/>
    <property type="match status" value="2"/>
</dbReference>
<proteinExistence type="evidence at transcript level"/>
<organism>
    <name type="scientific">Arabidopsis thaliana</name>
    <name type="common">Mouse-ear cress</name>
    <dbReference type="NCBI Taxonomy" id="3702"/>
    <lineage>
        <taxon>Eukaryota</taxon>
        <taxon>Viridiplantae</taxon>
        <taxon>Streptophyta</taxon>
        <taxon>Embryophyta</taxon>
        <taxon>Tracheophyta</taxon>
        <taxon>Spermatophyta</taxon>
        <taxon>Magnoliopsida</taxon>
        <taxon>eudicotyledons</taxon>
        <taxon>Gunneridae</taxon>
        <taxon>Pentapetalae</taxon>
        <taxon>rosids</taxon>
        <taxon>malvids</taxon>
        <taxon>Brassicales</taxon>
        <taxon>Brassicaceae</taxon>
        <taxon>Camelineae</taxon>
        <taxon>Arabidopsis</taxon>
    </lineage>
</organism>
<comment type="function">
    <text evidence="1">Probable transcription factor that may be involved in stress responses.</text>
</comment>
<comment type="subcellular location">
    <subcellularLocation>
        <location evidence="4">Nucleus</location>
    </subcellularLocation>
</comment>
<comment type="induction">
    <text evidence="3">By heat stress.</text>
</comment>
<gene>
    <name type="primary">ZAT8</name>
    <name type="ordered locus">At3g46080</name>
    <name type="ORF">F12M12.50</name>
</gene>
<feature type="chain" id="PRO_0000409717" description="Zinc finger protein ZAT8">
    <location>
        <begin position="1"/>
        <end position="164"/>
    </location>
</feature>
<feature type="zinc finger region" description="C2H2-type 1" evidence="2">
    <location>
        <begin position="37"/>
        <end position="59"/>
    </location>
</feature>
<feature type="zinc finger region" description="C2H2-type 2" evidence="2">
    <location>
        <begin position="85"/>
        <end position="107"/>
    </location>
</feature>
<reference key="1">
    <citation type="journal article" date="2000" name="Nature">
        <title>Sequence and analysis of chromosome 3 of the plant Arabidopsis thaliana.</title>
        <authorList>
            <person name="Salanoubat M."/>
            <person name="Lemcke K."/>
            <person name="Rieger M."/>
            <person name="Ansorge W."/>
            <person name="Unseld M."/>
            <person name="Fartmann B."/>
            <person name="Valle G."/>
            <person name="Bloecker H."/>
            <person name="Perez-Alonso M."/>
            <person name="Obermaier B."/>
            <person name="Delseny M."/>
            <person name="Boutry M."/>
            <person name="Grivell L.A."/>
            <person name="Mache R."/>
            <person name="Puigdomenech P."/>
            <person name="De Simone V."/>
            <person name="Choisne N."/>
            <person name="Artiguenave F."/>
            <person name="Robert C."/>
            <person name="Brottier P."/>
            <person name="Wincker P."/>
            <person name="Cattolico L."/>
            <person name="Weissenbach J."/>
            <person name="Saurin W."/>
            <person name="Quetier F."/>
            <person name="Schaefer M."/>
            <person name="Mueller-Auer S."/>
            <person name="Gabel C."/>
            <person name="Fuchs M."/>
            <person name="Benes V."/>
            <person name="Wurmbach E."/>
            <person name="Drzonek H."/>
            <person name="Erfle H."/>
            <person name="Jordan N."/>
            <person name="Bangert S."/>
            <person name="Wiedelmann R."/>
            <person name="Kranz H."/>
            <person name="Voss H."/>
            <person name="Holland R."/>
            <person name="Brandt P."/>
            <person name="Nyakatura G."/>
            <person name="Vezzi A."/>
            <person name="D'Angelo M."/>
            <person name="Pallavicini A."/>
            <person name="Toppo S."/>
            <person name="Simionati B."/>
            <person name="Conrad A."/>
            <person name="Hornischer K."/>
            <person name="Kauer G."/>
            <person name="Loehnert T.-H."/>
            <person name="Nordsiek G."/>
            <person name="Reichelt J."/>
            <person name="Scharfe M."/>
            <person name="Schoen O."/>
            <person name="Bargues M."/>
            <person name="Terol J."/>
            <person name="Climent J."/>
            <person name="Navarro P."/>
            <person name="Collado C."/>
            <person name="Perez-Perez A."/>
            <person name="Ottenwaelder B."/>
            <person name="Duchemin D."/>
            <person name="Cooke R."/>
            <person name="Laudie M."/>
            <person name="Berger-Llauro C."/>
            <person name="Purnelle B."/>
            <person name="Masuy D."/>
            <person name="de Haan M."/>
            <person name="Maarse A.C."/>
            <person name="Alcaraz J.-P."/>
            <person name="Cottet A."/>
            <person name="Casacuberta E."/>
            <person name="Monfort A."/>
            <person name="Argiriou A."/>
            <person name="Flores M."/>
            <person name="Liguori R."/>
            <person name="Vitale D."/>
            <person name="Mannhaupt G."/>
            <person name="Haase D."/>
            <person name="Schoof H."/>
            <person name="Rudd S."/>
            <person name="Zaccaria P."/>
            <person name="Mewes H.-W."/>
            <person name="Mayer K.F.X."/>
            <person name="Kaul S."/>
            <person name="Town C.D."/>
            <person name="Koo H.L."/>
            <person name="Tallon L.J."/>
            <person name="Jenkins J."/>
            <person name="Rooney T."/>
            <person name="Rizzo M."/>
            <person name="Walts A."/>
            <person name="Utterback T."/>
            <person name="Fujii C.Y."/>
            <person name="Shea T.P."/>
            <person name="Creasy T.H."/>
            <person name="Haas B."/>
            <person name="Maiti R."/>
            <person name="Wu D."/>
            <person name="Peterson J."/>
            <person name="Van Aken S."/>
            <person name="Pai G."/>
            <person name="Militscher J."/>
            <person name="Sellers P."/>
            <person name="Gill J.E."/>
            <person name="Feldblyum T.V."/>
            <person name="Preuss D."/>
            <person name="Lin X."/>
            <person name="Nierman W.C."/>
            <person name="Salzberg S.L."/>
            <person name="White O."/>
            <person name="Venter J.C."/>
            <person name="Fraser C.M."/>
            <person name="Kaneko T."/>
            <person name="Nakamura Y."/>
            <person name="Sato S."/>
            <person name="Kato T."/>
            <person name="Asamizu E."/>
            <person name="Sasamoto S."/>
            <person name="Kimura T."/>
            <person name="Idesawa K."/>
            <person name="Kawashima K."/>
            <person name="Kishida Y."/>
            <person name="Kiyokawa C."/>
            <person name="Kohara M."/>
            <person name="Matsumoto M."/>
            <person name="Matsuno A."/>
            <person name="Muraki A."/>
            <person name="Nakayama S."/>
            <person name="Nakazaki N."/>
            <person name="Shinpo S."/>
            <person name="Takeuchi C."/>
            <person name="Wada T."/>
            <person name="Watanabe A."/>
            <person name="Yamada M."/>
            <person name="Yasuda M."/>
            <person name="Tabata S."/>
        </authorList>
    </citation>
    <scope>NUCLEOTIDE SEQUENCE [LARGE SCALE GENOMIC DNA]</scope>
    <source>
        <strain>cv. Columbia</strain>
    </source>
</reference>
<reference key="2">
    <citation type="journal article" date="2017" name="Plant J.">
        <title>Araport11: a complete reannotation of the Arabidopsis thaliana reference genome.</title>
        <authorList>
            <person name="Cheng C.Y."/>
            <person name="Krishnakumar V."/>
            <person name="Chan A.P."/>
            <person name="Thibaud-Nissen F."/>
            <person name="Schobel S."/>
            <person name="Town C.D."/>
        </authorList>
    </citation>
    <scope>GENOME REANNOTATION</scope>
    <source>
        <strain>cv. Columbia</strain>
    </source>
</reference>
<reference key="3">
    <citation type="submission" date="2009-03" db="EMBL/GenBank/DDBJ databases">
        <title>ORF cloning and analysis of Arabidopsis transcription factor genes.</title>
        <authorList>
            <person name="Fujita M."/>
            <person name="Mizukado S."/>
            <person name="Seki M."/>
            <person name="Shinozaki K."/>
            <person name="Mitsuda N."/>
            <person name="Takiguchi Y."/>
            <person name="Takagi M."/>
        </authorList>
    </citation>
    <scope>NUCLEOTIDE SEQUENCE [LARGE SCALE MRNA]</scope>
</reference>
<reference key="4">
    <citation type="journal article" date="2008" name="J. Biol. Chem.">
        <title>The transcriptional co-activator MBF1c is a key regulator of thermotolerance in Arabidopsis thaliana.</title>
        <authorList>
            <person name="Suzuki N."/>
            <person name="Bajad S."/>
            <person name="Shuman J."/>
            <person name="Shulaev V."/>
            <person name="Mittler R."/>
        </authorList>
    </citation>
    <scope>INDUCTION BY HEAT STRESS</scope>
</reference>